<feature type="chain" id="PRO_0000130336" description="ELL-associated factor 1">
    <location>
        <begin position="1"/>
        <end position="268"/>
    </location>
</feature>
<feature type="region of interest" description="Disordered" evidence="3">
    <location>
        <begin position="106"/>
        <end position="268"/>
    </location>
</feature>
<feature type="region of interest" description="Necessary for transactivation activity" evidence="1">
    <location>
        <begin position="182"/>
        <end position="262"/>
    </location>
</feature>
<feature type="compositionally biased region" description="Pro residues" evidence="3">
    <location>
        <begin position="128"/>
        <end position="154"/>
    </location>
</feature>
<feature type="compositionally biased region" description="Basic and acidic residues" evidence="3">
    <location>
        <begin position="171"/>
        <end position="181"/>
    </location>
</feature>
<feature type="compositionally biased region" description="Low complexity" evidence="3">
    <location>
        <begin position="188"/>
        <end position="213"/>
    </location>
</feature>
<feature type="compositionally biased region" description="Polar residues" evidence="3">
    <location>
        <begin position="238"/>
        <end position="268"/>
    </location>
</feature>
<feature type="modified residue" description="Phosphoserine" evidence="2">
    <location>
        <position position="165"/>
    </location>
</feature>
<reference key="1">
    <citation type="submission" date="2004-11" db="EMBL/GenBank/DDBJ databases">
        <authorList>
            <consortium name="The German cDNA consortium"/>
        </authorList>
    </citation>
    <scope>NUCLEOTIDE SEQUENCE [LARGE SCALE MRNA]</scope>
    <source>
        <tissue>Brain cortex</tissue>
    </source>
</reference>
<evidence type="ECO:0000250" key="1"/>
<evidence type="ECO:0000250" key="2">
    <source>
        <dbReference type="UniProtKB" id="Q96JC9"/>
    </source>
</evidence>
<evidence type="ECO:0000256" key="3">
    <source>
        <dbReference type="SAM" id="MobiDB-lite"/>
    </source>
</evidence>
<evidence type="ECO:0000305" key="4"/>
<accession>Q5RAM8</accession>
<organism>
    <name type="scientific">Pongo abelii</name>
    <name type="common">Sumatran orangutan</name>
    <name type="synonym">Pongo pygmaeus abelii</name>
    <dbReference type="NCBI Taxonomy" id="9601"/>
    <lineage>
        <taxon>Eukaryota</taxon>
        <taxon>Metazoa</taxon>
        <taxon>Chordata</taxon>
        <taxon>Craniata</taxon>
        <taxon>Vertebrata</taxon>
        <taxon>Euteleostomi</taxon>
        <taxon>Mammalia</taxon>
        <taxon>Eutheria</taxon>
        <taxon>Euarchontoglires</taxon>
        <taxon>Primates</taxon>
        <taxon>Haplorrhini</taxon>
        <taxon>Catarrhini</taxon>
        <taxon>Hominidae</taxon>
        <taxon>Pongo</taxon>
    </lineage>
</organism>
<name>EAF1_PONAB</name>
<gene>
    <name type="primary">EAF1</name>
</gene>
<proteinExistence type="evidence at transcript level"/>
<dbReference type="EMBL" id="CR858987">
    <property type="protein sequence ID" value="CAH91182.1"/>
    <property type="molecule type" value="mRNA"/>
</dbReference>
<dbReference type="RefSeq" id="NP_001124559.1">
    <property type="nucleotide sequence ID" value="NM_001131087.1"/>
</dbReference>
<dbReference type="SMR" id="Q5RAM8"/>
<dbReference type="FunCoup" id="Q5RAM8">
    <property type="interactions" value="1979"/>
</dbReference>
<dbReference type="STRING" id="9601.ENSPPYP00000015761"/>
<dbReference type="GeneID" id="100169731"/>
<dbReference type="KEGG" id="pon:100169731"/>
<dbReference type="CTD" id="85403"/>
<dbReference type="eggNOG" id="KOG4795">
    <property type="taxonomic scope" value="Eukaryota"/>
</dbReference>
<dbReference type="HOGENOM" id="CLU_025755_0_0_1"/>
<dbReference type="InParanoid" id="Q5RAM8"/>
<dbReference type="OrthoDB" id="125903at2759"/>
<dbReference type="Proteomes" id="UP000001595">
    <property type="component" value="Unplaced"/>
</dbReference>
<dbReference type="GO" id="GO:0015030">
    <property type="term" value="C:Cajal body"/>
    <property type="evidence" value="ECO:0007669"/>
    <property type="project" value="UniProtKB-SubCell"/>
</dbReference>
<dbReference type="GO" id="GO:0016607">
    <property type="term" value="C:nuclear speck"/>
    <property type="evidence" value="ECO:0007669"/>
    <property type="project" value="UniProtKB-SubCell"/>
</dbReference>
<dbReference type="GO" id="GO:0032783">
    <property type="term" value="C:super elongation complex"/>
    <property type="evidence" value="ECO:0007669"/>
    <property type="project" value="InterPro"/>
</dbReference>
<dbReference type="GO" id="GO:0008023">
    <property type="term" value="C:transcription elongation factor complex"/>
    <property type="evidence" value="ECO:0000250"/>
    <property type="project" value="UniProtKB"/>
</dbReference>
<dbReference type="GO" id="GO:0003711">
    <property type="term" value="F:transcription elongation factor activity"/>
    <property type="evidence" value="ECO:0007669"/>
    <property type="project" value="TreeGrafter"/>
</dbReference>
<dbReference type="GO" id="GO:0006368">
    <property type="term" value="P:transcription elongation by RNA polymerase II"/>
    <property type="evidence" value="ECO:0007669"/>
    <property type="project" value="InterPro"/>
</dbReference>
<dbReference type="InterPro" id="IPR027093">
    <property type="entry name" value="EAF_fam"/>
</dbReference>
<dbReference type="InterPro" id="IPR019194">
    <property type="entry name" value="Tscrpt_elong_fac_Eaf_N"/>
</dbReference>
<dbReference type="PANTHER" id="PTHR15970:SF8">
    <property type="entry name" value="ELL-ASSOCIATED FACTOR 1"/>
    <property type="match status" value="1"/>
</dbReference>
<dbReference type="PANTHER" id="PTHR15970">
    <property type="entry name" value="ELL-ASSOCIATED FACTOR EAF"/>
    <property type="match status" value="1"/>
</dbReference>
<dbReference type="Pfam" id="PF09816">
    <property type="entry name" value="EAF"/>
    <property type="match status" value="1"/>
</dbReference>
<protein>
    <recommendedName>
        <fullName>ELL-associated factor 1</fullName>
    </recommendedName>
</protein>
<sequence length="268" mass="29042">MNGTANPLLDREEHCLRLGESFEKRPRASFHTIRYDFKPASIDTSCEGELQVGKGDEVTITLPHIPGSTPPMTVFKGNKRPYQKDCVLIINHDTGEYVLEKLSSSIQVKKTRAEGSSKIQARMEQQPTRPPQTSQPPPPPPPMPFRAPTKPPVGPKTSPLKDNPSPEPQLDDIKRELRAEVDIIEQMSSSSGSSSSDSESSSGSDDDSSSSGGEDNGPASPPQPSHQQPYNSRPAVANGTSRPQGSNQLMNTLRNDLQLSESGSDSDD</sequence>
<comment type="function">
    <text evidence="1">Acts as a transcriptional transactivator of ELL and ELL2 elongation activities.</text>
</comment>
<comment type="subunit">
    <text evidence="1">Component of the super elongation complex (SEC), at least composed of EAF1, EAF2, CDK9, MLLT3/AF9, AFF (AFF1 or AFF4), the P-TEFb complex and ELL (ELL, ELL2 or ELL3). Interacts with ELL and ELL2 (By similarity).</text>
</comment>
<comment type="subcellular location">
    <subcellularLocation>
        <location evidence="2">Nucleus speckle</location>
    </subcellularLocation>
    <subcellularLocation>
        <location evidence="2">Nucleus</location>
        <location evidence="2">Cajal body</location>
    </subcellularLocation>
</comment>
<comment type="similarity">
    <text evidence="4">Belongs to the EAF family.</text>
</comment>
<keyword id="KW-0010">Activator</keyword>
<keyword id="KW-0539">Nucleus</keyword>
<keyword id="KW-0597">Phosphoprotein</keyword>
<keyword id="KW-1185">Reference proteome</keyword>
<keyword id="KW-0804">Transcription</keyword>
<keyword id="KW-0805">Transcription regulation</keyword>